<proteinExistence type="inferred from homology"/>
<sequence>MMMHTRKRIFRSPATGPQVQFTDPFSVSPYNNMASRKRKADDDNDDMSVSPLSSPALPSRPIVRPSKKIRQANDDVAARPLSLPRLLETLTNDQLRTVLQTICERHPDIGHEVVTSAPRPTVACALDILAGYQEKLHDATPLGHTNSDYAYFRVKQQLGALLDAISDFTSQFLPPLEQQTNISLQFLDGVTKVIHELPDWENQSHRHHKDAAYDEISAAWALVITEASKRGGGFIVHTGGWDQRLVKHNQQSGGKMGQAINALAVEVGWQGQNPITDTPAPSGRDPNSILNQLINGAYGSPVRVGPW</sequence>
<feature type="chain" id="PRO_0000409429" description="Tethering factor for nuclear proteasome STS1">
    <location>
        <begin position="1"/>
        <end position="307"/>
    </location>
</feature>
<feature type="region of interest" description="Disordered" evidence="2">
    <location>
        <begin position="1"/>
        <end position="63"/>
    </location>
</feature>
<feature type="compositionally biased region" description="Basic residues" evidence="2">
    <location>
        <begin position="1"/>
        <end position="10"/>
    </location>
</feature>
<feature type="compositionally biased region" description="Polar residues" evidence="2">
    <location>
        <begin position="15"/>
        <end position="34"/>
    </location>
</feature>
<feature type="compositionally biased region" description="Low complexity" evidence="2">
    <location>
        <begin position="48"/>
        <end position="61"/>
    </location>
</feature>
<protein>
    <recommendedName>
        <fullName>Tethering factor for nuclear proteasome STS1</fullName>
    </recommendedName>
</protein>
<evidence type="ECO:0000250" key="1"/>
<evidence type="ECO:0000256" key="2">
    <source>
        <dbReference type="SAM" id="MobiDB-lite"/>
    </source>
</evidence>
<evidence type="ECO:0000305" key="3"/>
<comment type="function">
    <text evidence="1">Involved in ubiquitin-mediated protein degradation. Regulatory factor in the ubiquitin/proteasome pathway that controls the turnover of proteasome substrates. Targets proteasomes to the nucleus and facilitates the degradation of nuclear proteins (By similarity).</text>
</comment>
<comment type="subunit">
    <text evidence="1">Binds the proteasome.</text>
</comment>
<comment type="subcellular location">
    <subcellularLocation>
        <location evidence="1">Cytoplasm</location>
    </subcellularLocation>
    <subcellularLocation>
        <location evidence="1">Nucleus</location>
    </subcellularLocation>
</comment>
<comment type="similarity">
    <text evidence="3">Belongs to the cut8/STS1 family.</text>
</comment>
<organism>
    <name type="scientific">Podospora anserina (strain S / ATCC MYA-4624 / DSM 980 / FGSC 10383)</name>
    <name type="common">Pleurage anserina</name>
    <dbReference type="NCBI Taxonomy" id="515849"/>
    <lineage>
        <taxon>Eukaryota</taxon>
        <taxon>Fungi</taxon>
        <taxon>Dikarya</taxon>
        <taxon>Ascomycota</taxon>
        <taxon>Pezizomycotina</taxon>
        <taxon>Sordariomycetes</taxon>
        <taxon>Sordariomycetidae</taxon>
        <taxon>Sordariales</taxon>
        <taxon>Podosporaceae</taxon>
        <taxon>Podospora</taxon>
        <taxon>Podospora anserina</taxon>
    </lineage>
</organism>
<name>STS1_PODAN</name>
<accession>B2B7W0</accession>
<accession>A0A090D5R9</accession>
<dbReference type="EMBL" id="CU640366">
    <property type="protein sequence ID" value="CAP73889.1"/>
    <property type="molecule type" value="Genomic_DNA"/>
</dbReference>
<dbReference type="EMBL" id="FO904937">
    <property type="protein sequence ID" value="CDP26288.1"/>
    <property type="molecule type" value="Genomic_DNA"/>
</dbReference>
<dbReference type="RefSeq" id="XP_001912060.1">
    <property type="nucleotide sequence ID" value="XM_001912025.1"/>
</dbReference>
<dbReference type="SMR" id="B2B7W0"/>
<dbReference type="STRING" id="515849.B2B7W0"/>
<dbReference type="GeneID" id="6195843"/>
<dbReference type="KEGG" id="pan:PODANSg9106"/>
<dbReference type="VEuPathDB" id="FungiDB:PODANS_2_12440"/>
<dbReference type="eggNOG" id="ENOG502RNK4">
    <property type="taxonomic scope" value="Eukaryota"/>
</dbReference>
<dbReference type="HOGENOM" id="CLU_033658_0_0_1"/>
<dbReference type="InParanoid" id="B2B7W0"/>
<dbReference type="OrthoDB" id="10061064at2759"/>
<dbReference type="Proteomes" id="UP000001197">
    <property type="component" value="Chromosome 2"/>
</dbReference>
<dbReference type="GO" id="GO:0005737">
    <property type="term" value="C:cytoplasm"/>
    <property type="evidence" value="ECO:0007669"/>
    <property type="project" value="UniProtKB-SubCell"/>
</dbReference>
<dbReference type="GO" id="GO:0031965">
    <property type="term" value="C:nuclear membrane"/>
    <property type="evidence" value="ECO:0007669"/>
    <property type="project" value="TreeGrafter"/>
</dbReference>
<dbReference type="GO" id="GO:0070628">
    <property type="term" value="F:proteasome binding"/>
    <property type="evidence" value="ECO:0007669"/>
    <property type="project" value="TreeGrafter"/>
</dbReference>
<dbReference type="GO" id="GO:0071630">
    <property type="term" value="P:nuclear protein quality control by the ubiquitin-proteasome system"/>
    <property type="evidence" value="ECO:0007669"/>
    <property type="project" value="InterPro"/>
</dbReference>
<dbReference type="GO" id="GO:0031144">
    <property type="term" value="P:proteasome localization"/>
    <property type="evidence" value="ECO:0007669"/>
    <property type="project" value="InterPro"/>
</dbReference>
<dbReference type="GO" id="GO:0015031">
    <property type="term" value="P:protein transport"/>
    <property type="evidence" value="ECO:0007669"/>
    <property type="project" value="UniProtKB-KW"/>
</dbReference>
<dbReference type="FunFam" id="1.20.58.1590:FF:000001">
    <property type="entry name" value="Tethering factor for nuclear proteasome STS1"/>
    <property type="match status" value="1"/>
</dbReference>
<dbReference type="Gene3D" id="1.20.58.1590">
    <property type="entry name" value="Tethering factor for nuclear proteasome Cut8/Sts1"/>
    <property type="match status" value="1"/>
</dbReference>
<dbReference type="InterPro" id="IPR013868">
    <property type="entry name" value="Cut8/Sts1_fam"/>
</dbReference>
<dbReference type="InterPro" id="IPR038422">
    <property type="entry name" value="Cut8/Sts1_sf"/>
</dbReference>
<dbReference type="PANTHER" id="PTHR28032">
    <property type="entry name" value="FI02826P"/>
    <property type="match status" value="1"/>
</dbReference>
<dbReference type="PANTHER" id="PTHR28032:SF1">
    <property type="entry name" value="FI02826P"/>
    <property type="match status" value="1"/>
</dbReference>
<dbReference type="Pfam" id="PF08559">
    <property type="entry name" value="Cut8"/>
    <property type="match status" value="1"/>
</dbReference>
<gene>
    <name type="primary">STS1</name>
    <name type="ordered locus">Pa_2_12440</name>
    <name type="ORF">PODANS_2_12440</name>
</gene>
<keyword id="KW-0963">Cytoplasm</keyword>
<keyword id="KW-0539">Nucleus</keyword>
<keyword id="KW-0653">Protein transport</keyword>
<keyword id="KW-1185">Reference proteome</keyword>
<keyword id="KW-0813">Transport</keyword>
<reference key="1">
    <citation type="journal article" date="2008" name="Genome Biol.">
        <title>The genome sequence of the model ascomycete fungus Podospora anserina.</title>
        <authorList>
            <person name="Espagne E."/>
            <person name="Lespinet O."/>
            <person name="Malagnac F."/>
            <person name="Da Silva C."/>
            <person name="Jaillon O."/>
            <person name="Porcel B.M."/>
            <person name="Couloux A."/>
            <person name="Aury J.-M."/>
            <person name="Segurens B."/>
            <person name="Poulain J."/>
            <person name="Anthouard V."/>
            <person name="Grossetete S."/>
            <person name="Khalili H."/>
            <person name="Coppin E."/>
            <person name="Dequard-Chablat M."/>
            <person name="Picard M."/>
            <person name="Contamine V."/>
            <person name="Arnaise S."/>
            <person name="Bourdais A."/>
            <person name="Berteaux-Lecellier V."/>
            <person name="Gautheret D."/>
            <person name="de Vries R.P."/>
            <person name="Battaglia E."/>
            <person name="Coutinho P.M."/>
            <person name="Danchin E.G.J."/>
            <person name="Henrissat B."/>
            <person name="El Khoury R."/>
            <person name="Sainsard-Chanet A."/>
            <person name="Boivin A."/>
            <person name="Pinan-Lucarre B."/>
            <person name="Sellem C.H."/>
            <person name="Debuchy R."/>
            <person name="Wincker P."/>
            <person name="Weissenbach J."/>
            <person name="Silar P."/>
        </authorList>
    </citation>
    <scope>NUCLEOTIDE SEQUENCE [LARGE SCALE GENOMIC DNA]</scope>
    <source>
        <strain>S / ATCC MYA-4624 / DSM 980 / FGSC 10383</strain>
    </source>
</reference>
<reference key="2">
    <citation type="journal article" date="2014" name="Genetics">
        <title>Maintaining two mating types: Structure of the mating type locus and its role in heterokaryosis in Podospora anserina.</title>
        <authorList>
            <person name="Grognet P."/>
            <person name="Bidard F."/>
            <person name="Kuchly C."/>
            <person name="Tong L.C.H."/>
            <person name="Coppin E."/>
            <person name="Benkhali J.A."/>
            <person name="Couloux A."/>
            <person name="Wincker P."/>
            <person name="Debuchy R."/>
            <person name="Silar P."/>
        </authorList>
    </citation>
    <scope>GENOME REANNOTATION</scope>
    <source>
        <strain>S / ATCC MYA-4624 / DSM 980 / FGSC 10383</strain>
    </source>
</reference>